<protein>
    <recommendedName>
        <fullName>CRP-like protein Clp</fullName>
    </recommendedName>
    <alternativeName>
        <fullName>Catabolite activation-like protein</fullName>
        <shortName>CAP-like</shortName>
    </alternativeName>
</protein>
<name>CLP_XANCP</name>
<comment type="function">
    <text evidence="2">Global transcriptional regulator that regulates virulence factors production by activating or repressing the expression of a large set of genes in diffusible signal factor (DSF) pathway. It includes, among others, genes involved in extracellular polysaccharide (EPS) synthesis, flagellum synthesis, protein and fatty acid metabolism, multidrug resistance, iron uptake or genes encoding extracellular enzymes, membrane components and a few transcription factors. Regulation can be direct or indirect, via regulation of other transcriptional regulators. Not involved in DSF-mediated biofilm dispersal.</text>
</comment>
<comment type="activity regulation">
    <text evidence="3 4">Allosterically inhibited by cyclic di-GMP (c-di-GMP), which binds to Clp and abolishes its ability to bind its target gene promoter.</text>
</comment>
<comment type="subunit">
    <text evidence="3">Homodimer.</text>
</comment>
<comment type="subcellular location">
    <subcellularLocation>
        <location evidence="5">Cytoplasm</location>
    </subcellularLocation>
</comment>
<comment type="induction">
    <text evidence="2">Expression is induced by DSF signal, via the RpfC/RpfG two-component system.</text>
</comment>
<comment type="domain">
    <text evidence="3">Binding of c-di-GMP appears to trigger the active Clp conformation into an open form or inactive state, hence abolishing its DNA-binding ability.</text>
</comment>
<comment type="disruption phenotype">
    <text evidence="2">Mutant produces less EPS and shows decrease in cellulase and protease activities.</text>
</comment>
<organism>
    <name type="scientific">Xanthomonas campestris pv. campestris (strain ATCC 33913 / DSM 3586 / NCPPB 528 / LMG 568 / P 25)</name>
    <dbReference type="NCBI Taxonomy" id="190485"/>
    <lineage>
        <taxon>Bacteria</taxon>
        <taxon>Pseudomonadati</taxon>
        <taxon>Pseudomonadota</taxon>
        <taxon>Gammaproteobacteria</taxon>
        <taxon>Lysobacterales</taxon>
        <taxon>Lysobacteraceae</taxon>
        <taxon>Xanthomonas</taxon>
    </lineage>
</organism>
<proteinExistence type="evidence at protein level"/>
<reference key="1">
    <citation type="journal article" date="1990" name="J. Bacteriol.">
        <title>A Xanthomonas campestris pv. campestris protein similar to catabolite activation factor is involved in regulation of phytopathogenicity.</title>
        <authorList>
            <person name="de Crecy-Lagard V."/>
            <person name="Glaser P."/>
            <person name="Lejeune P."/>
            <person name="Sismeiro O."/>
            <person name="Barber C.E."/>
            <person name="Daniels M.J."/>
            <person name="Danchin A."/>
        </authorList>
    </citation>
    <scope>NUCLEOTIDE SEQUENCE [GENOMIC DNA]</scope>
    <source>
        <strain>ATCC 13951 / NCIB 11803 / NRRL B-1459</strain>
    </source>
</reference>
<reference key="2">
    <citation type="journal article" date="1992" name="J. Bacteriol.">
        <title>DNA binding specificity and sequence of Xanthomonas campestris catabolite gene activator protein-like protein.</title>
        <authorList>
            <person name="Dong Q."/>
            <person name="Ebright R.H."/>
        </authorList>
    </citation>
    <scope>NUCLEOTIDE SEQUENCE [GENOMIC DNA]</scope>
</reference>
<reference key="3">
    <citation type="journal article" date="2001" name="J. Mol. Microbiol. Biotechnol.">
        <title>The early stages of filamentous phage phiLf infection require the host transcription factor, Clp.</title>
        <authorList>
            <person name="Lee T.C."/>
            <person name="Chen S.T."/>
            <person name="Lee M.C."/>
            <person name="Chang C.M."/>
            <person name="Chen C.H."/>
            <person name="Weng S.F."/>
            <person name="Tseng Y.H."/>
        </authorList>
    </citation>
    <scope>NUCLEOTIDE SEQUENCE [GENOMIC DNA]</scope>
    <source>
        <strain>Xc17</strain>
    </source>
</reference>
<reference key="4">
    <citation type="journal article" date="2002" name="Nature">
        <title>Comparison of the genomes of two Xanthomonas pathogens with differing host specificities.</title>
        <authorList>
            <person name="da Silva A.C.R."/>
            <person name="Ferro J.A."/>
            <person name="Reinach F.C."/>
            <person name="Farah C.S."/>
            <person name="Furlan L.R."/>
            <person name="Quaggio R.B."/>
            <person name="Monteiro-Vitorello C.B."/>
            <person name="Van Sluys M.A."/>
            <person name="Almeida N.F. Jr."/>
            <person name="Alves L.M.C."/>
            <person name="do Amaral A.M."/>
            <person name="Bertolini M.C."/>
            <person name="Camargo L.E.A."/>
            <person name="Camarotte G."/>
            <person name="Cannavan F."/>
            <person name="Cardozo J."/>
            <person name="Chambergo F."/>
            <person name="Ciapina L.P."/>
            <person name="Cicarelli R.M.B."/>
            <person name="Coutinho L.L."/>
            <person name="Cursino-Santos J.R."/>
            <person name="El-Dorry H."/>
            <person name="Faria J.B."/>
            <person name="Ferreira A.J.S."/>
            <person name="Ferreira R.C.C."/>
            <person name="Ferro M.I.T."/>
            <person name="Formighieri E.F."/>
            <person name="Franco M.C."/>
            <person name="Greggio C.C."/>
            <person name="Gruber A."/>
            <person name="Katsuyama A.M."/>
            <person name="Kishi L.T."/>
            <person name="Leite R.P."/>
            <person name="Lemos E.G.M."/>
            <person name="Lemos M.V.F."/>
            <person name="Locali E.C."/>
            <person name="Machado M.A."/>
            <person name="Madeira A.M.B.N."/>
            <person name="Martinez-Rossi N.M."/>
            <person name="Martins E.C."/>
            <person name="Meidanis J."/>
            <person name="Menck C.F.M."/>
            <person name="Miyaki C.Y."/>
            <person name="Moon D.H."/>
            <person name="Moreira L.M."/>
            <person name="Novo M.T.M."/>
            <person name="Okura V.K."/>
            <person name="Oliveira M.C."/>
            <person name="Oliveira V.R."/>
            <person name="Pereira H.A."/>
            <person name="Rossi A."/>
            <person name="Sena J.A.D."/>
            <person name="Silva C."/>
            <person name="de Souza R.F."/>
            <person name="Spinola L.A.F."/>
            <person name="Takita M.A."/>
            <person name="Tamura R.E."/>
            <person name="Teixeira E.C."/>
            <person name="Tezza R.I.D."/>
            <person name="Trindade dos Santos M."/>
            <person name="Truffi D."/>
            <person name="Tsai S.M."/>
            <person name="White F.F."/>
            <person name="Setubal J.C."/>
            <person name="Kitajima J.P."/>
        </authorList>
    </citation>
    <scope>NUCLEOTIDE SEQUENCE [LARGE SCALE GENOMIC DNA]</scope>
    <source>
        <strain>ATCC 33913 / DSM 3586 / NCPPB 528 / LMG 568 / P 25</strain>
    </source>
</reference>
<reference key="5">
    <citation type="journal article" date="2007" name="Mol. Microbiol.">
        <title>Xanthomonas campestris cell-cell communication involves a putative nucleotide receptor protein Clp and a hierarchical signalling network.</title>
        <authorList>
            <person name="He Y.W."/>
            <person name="Ng A.Y."/>
            <person name="Xu M."/>
            <person name="Lin K."/>
            <person name="Wang L.H."/>
            <person name="Dong Y.H."/>
            <person name="Zhang L.H."/>
        </authorList>
    </citation>
    <scope>FUNCTION</scope>
    <scope>INDUCTION</scope>
    <scope>DISRUPTION PHENOTYPE</scope>
    <source>
        <strain>Xc1</strain>
    </source>
</reference>
<reference key="6">
    <citation type="journal article" date="2010" name="J. Bacteriol.">
        <title>The cyclic nucleotide monophosphate domain of Xanthomonas campestris global regulator Clp defines a new class of cyclic di-GMP effectors.</title>
        <authorList>
            <person name="Tao F."/>
            <person name="He Y.W."/>
            <person name="Wu D.H."/>
            <person name="Swarup S."/>
            <person name="Zhang L.H."/>
        </authorList>
    </citation>
    <scope>DNA-BINDING</scope>
    <scope>ACTIVITY REGULATION</scope>
    <source>
        <strain>8004</strain>
    </source>
</reference>
<reference key="7">
    <citation type="journal article" date="2010" name="J. Mol. Biol.">
        <title>The cAMP receptor-like protein CLP is a novel c-di-GMP receptor linking cell-cell signaling to virulence gene expression in Xanthomonas campestris.</title>
        <authorList>
            <person name="Chin K.H."/>
            <person name="Lee Y.C."/>
            <person name="Tu Z.L."/>
            <person name="Chen C.H."/>
            <person name="Tseng Y.H."/>
            <person name="Yang J.M."/>
            <person name="Ryan R.P."/>
            <person name="McCarthy Y."/>
            <person name="Dow J.M."/>
            <person name="Wang A.H."/>
            <person name="Chou S.H."/>
        </authorList>
    </citation>
    <scope>X-RAY CRYSTALLOGRAPHY (2.3 ANGSTROMS)</scope>
    <scope>DNA-BINDING</scope>
    <scope>ACTIVITY REGULATION</scope>
    <scope>SUBUNIT</scope>
    <scope>DOMAIN</scope>
    <scope>MUTAGENESIS OF ASP-70; GLU-99; ARG-150; ARG-154; ASP-162; VAL-165; ARG-166; ASP-170 AND ARG-195</scope>
    <source>
        <strain>Xc17</strain>
    </source>
</reference>
<dbReference type="EMBL" id="M58745">
    <property type="protein sequence ID" value="AAA27597.1"/>
    <property type="molecule type" value="Genomic_DNA"/>
</dbReference>
<dbReference type="EMBL" id="M92289">
    <property type="protein sequence ID" value="AAA27598.1"/>
    <property type="molecule type" value="Genomic_DNA"/>
</dbReference>
<dbReference type="EMBL" id="AF111840">
    <property type="protein sequence ID" value="AAD20599.1"/>
    <property type="molecule type" value="Genomic_DNA"/>
</dbReference>
<dbReference type="EMBL" id="AE008922">
    <property type="protein sequence ID" value="AAM39790.1"/>
    <property type="molecule type" value="Genomic_DNA"/>
</dbReference>
<dbReference type="PIR" id="A42949">
    <property type="entry name" value="A42949"/>
</dbReference>
<dbReference type="RefSeq" id="NP_635866.1">
    <property type="nucleotide sequence ID" value="NC_003902.1"/>
</dbReference>
<dbReference type="PDB" id="3IWZ">
    <property type="method" value="X-ray"/>
    <property type="resolution" value="2.30 A"/>
    <property type="chains" value="A/B/C/D=1-230"/>
</dbReference>
<dbReference type="PDBsum" id="3IWZ"/>
<dbReference type="SMR" id="P22260"/>
<dbReference type="STRING" id="190485.XCC0472"/>
<dbReference type="EnsemblBacteria" id="AAM39790">
    <property type="protein sequence ID" value="AAM39790"/>
    <property type="gene ID" value="XCC0472"/>
</dbReference>
<dbReference type="KEGG" id="xcc:XCC0472"/>
<dbReference type="PATRIC" id="fig|190485.4.peg.519"/>
<dbReference type="eggNOG" id="COG0664">
    <property type="taxonomic scope" value="Bacteria"/>
</dbReference>
<dbReference type="HOGENOM" id="CLU_075053_3_5_6"/>
<dbReference type="OrthoDB" id="61906at2"/>
<dbReference type="EvolutionaryTrace" id="P22260"/>
<dbReference type="PHI-base" id="PHI:12171"/>
<dbReference type="Proteomes" id="UP000001010">
    <property type="component" value="Chromosome"/>
</dbReference>
<dbReference type="GO" id="GO:0005829">
    <property type="term" value="C:cytosol"/>
    <property type="evidence" value="ECO:0000318"/>
    <property type="project" value="GO_Central"/>
</dbReference>
<dbReference type="GO" id="GO:0003824">
    <property type="term" value="F:catalytic activity"/>
    <property type="evidence" value="ECO:0007669"/>
    <property type="project" value="UniProtKB-KW"/>
</dbReference>
<dbReference type="GO" id="GO:0035438">
    <property type="term" value="F:cyclic-di-GMP binding"/>
    <property type="evidence" value="ECO:0000314"/>
    <property type="project" value="UniProtKB"/>
</dbReference>
<dbReference type="GO" id="GO:0003677">
    <property type="term" value="F:DNA binding"/>
    <property type="evidence" value="ECO:0000314"/>
    <property type="project" value="UniProtKB"/>
</dbReference>
<dbReference type="GO" id="GO:0003700">
    <property type="term" value="F:DNA-binding transcription factor activity"/>
    <property type="evidence" value="ECO:0000315"/>
    <property type="project" value="UniProtKB"/>
</dbReference>
<dbReference type="GO" id="GO:0046983">
    <property type="term" value="F:protein dimerization activity"/>
    <property type="evidence" value="ECO:0000314"/>
    <property type="project" value="UniProtKB"/>
</dbReference>
<dbReference type="GO" id="GO:0006355">
    <property type="term" value="P:regulation of DNA-templated transcription"/>
    <property type="evidence" value="ECO:0000315"/>
    <property type="project" value="UniProtKB"/>
</dbReference>
<dbReference type="CDD" id="cd00038">
    <property type="entry name" value="CAP_ED"/>
    <property type="match status" value="1"/>
</dbReference>
<dbReference type="FunFam" id="1.10.10.10:FF:000006">
    <property type="entry name" value="cAMP-activated global transcriptional regulator CRP"/>
    <property type="match status" value="1"/>
</dbReference>
<dbReference type="FunFam" id="2.60.120.10:FF:000100">
    <property type="entry name" value="CRP-like protein Clp"/>
    <property type="match status" value="1"/>
</dbReference>
<dbReference type="Gene3D" id="2.60.120.10">
    <property type="entry name" value="Jelly Rolls"/>
    <property type="match status" value="1"/>
</dbReference>
<dbReference type="Gene3D" id="1.10.10.10">
    <property type="entry name" value="Winged helix-like DNA-binding domain superfamily/Winged helix DNA-binding domain"/>
    <property type="match status" value="1"/>
</dbReference>
<dbReference type="InterPro" id="IPR000595">
    <property type="entry name" value="cNMP-bd_dom"/>
</dbReference>
<dbReference type="InterPro" id="IPR018490">
    <property type="entry name" value="cNMP-bd_dom_sf"/>
</dbReference>
<dbReference type="InterPro" id="IPR050397">
    <property type="entry name" value="Env_Response_Regulators"/>
</dbReference>
<dbReference type="InterPro" id="IPR012318">
    <property type="entry name" value="HTH_CRP"/>
</dbReference>
<dbReference type="InterPro" id="IPR014710">
    <property type="entry name" value="RmlC-like_jellyroll"/>
</dbReference>
<dbReference type="InterPro" id="IPR018335">
    <property type="entry name" value="Tscrpt_reg_HTH_Crp-type_CS"/>
</dbReference>
<dbReference type="InterPro" id="IPR036388">
    <property type="entry name" value="WH-like_DNA-bd_sf"/>
</dbReference>
<dbReference type="InterPro" id="IPR036390">
    <property type="entry name" value="WH_DNA-bd_sf"/>
</dbReference>
<dbReference type="NCBIfam" id="NF008732">
    <property type="entry name" value="PRK11753.1"/>
    <property type="match status" value="1"/>
</dbReference>
<dbReference type="PANTHER" id="PTHR24567">
    <property type="entry name" value="CRP FAMILY TRANSCRIPTIONAL REGULATORY PROTEIN"/>
    <property type="match status" value="1"/>
</dbReference>
<dbReference type="PANTHER" id="PTHR24567:SF68">
    <property type="entry name" value="DNA-BINDING TRANSCRIPTIONAL DUAL REGULATOR CRP"/>
    <property type="match status" value="1"/>
</dbReference>
<dbReference type="Pfam" id="PF00027">
    <property type="entry name" value="cNMP_binding"/>
    <property type="match status" value="1"/>
</dbReference>
<dbReference type="Pfam" id="PF00325">
    <property type="entry name" value="Crp"/>
    <property type="match status" value="1"/>
</dbReference>
<dbReference type="PRINTS" id="PR00034">
    <property type="entry name" value="HTHCRP"/>
</dbReference>
<dbReference type="SMART" id="SM00100">
    <property type="entry name" value="cNMP"/>
    <property type="match status" value="1"/>
</dbReference>
<dbReference type="SMART" id="SM00419">
    <property type="entry name" value="HTH_CRP"/>
    <property type="match status" value="1"/>
</dbReference>
<dbReference type="SUPFAM" id="SSF51206">
    <property type="entry name" value="cAMP-binding domain-like"/>
    <property type="match status" value="1"/>
</dbReference>
<dbReference type="SUPFAM" id="SSF46785">
    <property type="entry name" value="Winged helix' DNA-binding domain"/>
    <property type="match status" value="1"/>
</dbReference>
<dbReference type="PROSITE" id="PS50042">
    <property type="entry name" value="CNMP_BINDING_3"/>
    <property type="match status" value="1"/>
</dbReference>
<dbReference type="PROSITE" id="PS00042">
    <property type="entry name" value="HTH_CRP_1"/>
    <property type="match status" value="1"/>
</dbReference>
<dbReference type="PROSITE" id="PS51063">
    <property type="entry name" value="HTH_CRP_2"/>
    <property type="match status" value="1"/>
</dbReference>
<gene>
    <name type="primary">clp</name>
    <name type="ordered locus">XCC0472</name>
</gene>
<sequence>MSLGNTTVVTTTVRNATPSLTLDAGTIERFLAHSHRRRYPTRTDVFRPGDPAGTLYYVISGSVSIIAEEDDDRELVLGYFGSGEFVGEMGLFIESDTREVILRTRTQCELAEISYERLQQLFQTSLSPDAPRILYAIGVQLSKRLLDTTRKASRLAFLDVTDRIVRTLHDLSKEPEAMSHPQGTQLRVSRQELARLVGCSREMAGRVLKKLQADGLLHARGKTVVLYGTR</sequence>
<keyword id="KW-0002">3D-structure</keyword>
<keyword id="KW-0010">Activator</keyword>
<keyword id="KW-0021">Allosteric enzyme</keyword>
<keyword id="KW-0973">c-di-GMP</keyword>
<keyword id="KW-0963">Cytoplasm</keyword>
<keyword id="KW-0238">DNA-binding</keyword>
<keyword id="KW-1185">Reference proteome</keyword>
<keyword id="KW-0678">Repressor</keyword>
<keyword id="KW-0804">Transcription</keyword>
<keyword id="KW-0805">Transcription regulation</keyword>
<keyword id="KW-0843">Virulence</keyword>
<feature type="chain" id="PRO_0000100152" description="CRP-like protein Clp">
    <location>
        <begin position="1"/>
        <end position="230"/>
    </location>
</feature>
<feature type="domain" description="HTH crp-type" evidence="1">
    <location>
        <begin position="158"/>
        <end position="230"/>
    </location>
</feature>
<feature type="DNA-binding region" description="H-T-H motif" evidence="1">
    <location>
        <begin position="190"/>
        <end position="209"/>
    </location>
</feature>
<feature type="binding site">
    <location>
        <begin position="18"/>
        <end position="139"/>
    </location>
    <ligand>
        <name>a nucleoside 3',5'-cyclic phosphate</name>
        <dbReference type="ChEBI" id="CHEBI:58464"/>
    </ligand>
</feature>
<feature type="mutagenesis site" description="Almost no change in DNA-binding, but decrease in c-di-GMP-binding." evidence="3">
    <original>D</original>
    <variation>A</variation>
    <location>
        <position position="70"/>
    </location>
</feature>
<feature type="mutagenesis site" description="Decrease in DNA-binding." evidence="3">
    <original>E</original>
    <variation>A</variation>
    <location>
        <position position="99"/>
    </location>
</feature>
<feature type="mutagenesis site" description="Decrease in DNA-binding." evidence="3">
    <original>R</original>
    <variation>A</variation>
    <location>
        <position position="150"/>
    </location>
</feature>
<feature type="mutagenesis site" description="Almost no change in DNA-binding, but decrease in c-di-GMP-binding." evidence="3">
    <original>R</original>
    <variation>A</variation>
    <location>
        <position position="154"/>
    </location>
</feature>
<feature type="mutagenesis site" description="Decrease in DNA-binding." evidence="3">
    <original>D</original>
    <variation>A</variation>
    <location>
        <position position="162"/>
    </location>
</feature>
<feature type="mutagenesis site" description="Decrease in DNA-binding." evidence="3">
    <original>V</original>
    <variation>A</variation>
    <location>
        <position position="165"/>
    </location>
</feature>
<feature type="mutagenesis site" description="Almost no change in DNA-binding, but decrease in c-di-GMP-binding." evidence="3">
    <original>R</original>
    <variation>A</variation>
    <location>
        <position position="166"/>
    </location>
</feature>
<feature type="mutagenesis site" description="Almost no change in DNA-binding, but decrease in c-di-GMP-binding." evidence="3">
    <original>D</original>
    <variation>A</variation>
    <location>
        <position position="170"/>
    </location>
</feature>
<feature type="mutagenesis site" description="Decrease in DNA-binding." evidence="3">
    <original>R</original>
    <variation>A</variation>
    <location>
        <position position="195"/>
    </location>
</feature>
<feature type="sequence conflict" description="In Ref. 1; AAA27597 and 2; AAA27598." evidence="5" ref="1 2">
    <original>R</original>
    <variation>H</variation>
    <location>
        <position position="98"/>
    </location>
</feature>
<feature type="sequence conflict" description="In Ref. 3; AAD20599." evidence="5" ref="3">
    <original>V</original>
    <variation>A</variation>
    <location>
        <position position="139"/>
    </location>
</feature>
<feature type="sequence conflict" description="In Ref. 1; AAA27597." evidence="5" ref="1">
    <original>SRE</original>
    <variation>CAQ</variation>
    <location>
        <begin position="200"/>
        <end position="202"/>
    </location>
</feature>
<feature type="helix" evidence="6">
    <location>
        <begin position="24"/>
        <end position="31"/>
    </location>
</feature>
<feature type="strand" evidence="6">
    <location>
        <begin position="34"/>
        <end position="39"/>
    </location>
</feature>
<feature type="strand" evidence="6">
    <location>
        <begin position="44"/>
        <end position="46"/>
    </location>
</feature>
<feature type="strand" evidence="6">
    <location>
        <begin position="54"/>
        <end position="61"/>
    </location>
</feature>
<feature type="strand" evidence="6">
    <location>
        <begin position="63"/>
        <end position="68"/>
    </location>
</feature>
<feature type="strand" evidence="6">
    <location>
        <begin position="74"/>
        <end position="80"/>
    </location>
</feature>
<feature type="strand" evidence="6">
    <location>
        <begin position="85"/>
        <end position="87"/>
    </location>
</feature>
<feature type="helix" evidence="6">
    <location>
        <begin position="89"/>
        <end position="91"/>
    </location>
</feature>
<feature type="strand" evidence="6">
    <location>
        <begin position="100"/>
        <end position="106"/>
    </location>
</feature>
<feature type="strand" evidence="6">
    <location>
        <begin position="108"/>
        <end position="114"/>
    </location>
</feature>
<feature type="helix" evidence="6">
    <location>
        <begin position="115"/>
        <end position="123"/>
    </location>
</feature>
<feature type="turn" evidence="6">
    <location>
        <begin position="124"/>
        <end position="126"/>
    </location>
</feature>
<feature type="helix" evidence="6">
    <location>
        <begin position="127"/>
        <end position="129"/>
    </location>
</feature>
<feature type="helix" evidence="6">
    <location>
        <begin position="130"/>
        <end position="157"/>
    </location>
</feature>
<feature type="helix" evidence="6">
    <location>
        <begin position="160"/>
        <end position="171"/>
    </location>
</feature>
<feature type="strand" evidence="6">
    <location>
        <begin position="178"/>
        <end position="180"/>
    </location>
</feature>
<feature type="strand" evidence="6">
    <location>
        <begin position="183"/>
        <end position="187"/>
    </location>
</feature>
<feature type="helix" evidence="6">
    <location>
        <begin position="190"/>
        <end position="197"/>
    </location>
</feature>
<feature type="helix" evidence="6">
    <location>
        <begin position="201"/>
        <end position="213"/>
    </location>
</feature>
<feature type="strand" evidence="6">
    <location>
        <begin position="216"/>
        <end position="220"/>
    </location>
</feature>
<feature type="strand" evidence="6">
    <location>
        <begin position="223"/>
        <end position="227"/>
    </location>
</feature>
<accession>P22260</accession>
<accession>Q9S6B5</accession>
<evidence type="ECO:0000255" key="1">
    <source>
        <dbReference type="PROSITE-ProRule" id="PRU00387"/>
    </source>
</evidence>
<evidence type="ECO:0000269" key="2">
    <source>
    </source>
</evidence>
<evidence type="ECO:0000269" key="3">
    <source>
    </source>
</evidence>
<evidence type="ECO:0000269" key="4">
    <source>
    </source>
</evidence>
<evidence type="ECO:0000305" key="5"/>
<evidence type="ECO:0007829" key="6">
    <source>
        <dbReference type="PDB" id="3IWZ"/>
    </source>
</evidence>